<evidence type="ECO:0000255" key="1"/>
<evidence type="ECO:0000269" key="2">
    <source>
    </source>
</evidence>
<evidence type="ECO:0000305" key="3"/>
<reference key="1">
    <citation type="journal article" date="1993" name="Nucleic Acids Res.">
        <title>Analysis of the Escherichia coli genome. IV. DNA sequence of the region from 89.2 to 92.8 minutes.</title>
        <authorList>
            <person name="Blattner F.R."/>
            <person name="Burland V.D."/>
            <person name="Plunkett G. III"/>
            <person name="Sofia H.J."/>
            <person name="Daniels D.L."/>
        </authorList>
    </citation>
    <scope>NUCLEOTIDE SEQUENCE [LARGE SCALE GENOMIC DNA]</scope>
    <source>
        <strain>K12 / MG1655 / ATCC 47076</strain>
    </source>
</reference>
<reference key="2">
    <citation type="journal article" date="1997" name="Science">
        <title>The complete genome sequence of Escherichia coli K-12.</title>
        <authorList>
            <person name="Blattner F.R."/>
            <person name="Plunkett G. III"/>
            <person name="Bloch C.A."/>
            <person name="Perna N.T."/>
            <person name="Burland V."/>
            <person name="Riley M."/>
            <person name="Collado-Vides J."/>
            <person name="Glasner J.D."/>
            <person name="Rode C.K."/>
            <person name="Mayhew G.F."/>
            <person name="Gregor J."/>
            <person name="Davis N.W."/>
            <person name="Kirkpatrick H.A."/>
            <person name="Goeden M.A."/>
            <person name="Rose D.J."/>
            <person name="Mau B."/>
            <person name="Shao Y."/>
        </authorList>
    </citation>
    <scope>NUCLEOTIDE SEQUENCE [LARGE SCALE GENOMIC DNA]</scope>
    <source>
        <strain>K12 / MG1655 / ATCC 47076</strain>
    </source>
</reference>
<reference key="3">
    <citation type="journal article" date="2006" name="Mol. Syst. Biol.">
        <title>Highly accurate genome sequences of Escherichia coli K-12 strains MG1655 and W3110.</title>
        <authorList>
            <person name="Hayashi K."/>
            <person name="Morooka N."/>
            <person name="Yamamoto Y."/>
            <person name="Fujita K."/>
            <person name="Isono K."/>
            <person name="Choi S."/>
            <person name="Ohtsubo E."/>
            <person name="Baba T."/>
            <person name="Wanner B.L."/>
            <person name="Mori H."/>
            <person name="Horiuchi T."/>
        </authorList>
    </citation>
    <scope>NUCLEOTIDE SEQUENCE [LARGE SCALE GENOMIC DNA]</scope>
    <source>
        <strain>K12 / W3110 / ATCC 27325 / DSM 5911</strain>
    </source>
</reference>
<reference key="4">
    <citation type="journal article" date="1995" name="Nucleic Acids Res.">
        <title>Analysis of the Escherichia coli genome VI: DNA sequence of the region from 92.8 through 100 minutes.</title>
        <authorList>
            <person name="Burland V.D."/>
            <person name="Plunkett G. III"/>
            <person name="Sofia H.J."/>
            <person name="Daniels D.L."/>
            <person name="Blattner F.R."/>
        </authorList>
    </citation>
    <scope>NUCLEOTIDE SEQUENCE [LARGE SCALE GENOMIC DNA] OF 1-133</scope>
    <source>
        <strain>K12 / MG1655 / ATCC 47076</strain>
    </source>
</reference>
<reference key="5">
    <citation type="journal article" date="1997" name="J. Bacteriol.">
        <title>The D-allose operon of Escherichia coli K-12.</title>
        <authorList>
            <person name="Kim C."/>
            <person name="Song S."/>
            <person name="Park C."/>
        </authorList>
    </citation>
    <scope>FUNCTION</scope>
</reference>
<reference key="6">
    <citation type="journal article" date="2005" name="Science">
        <title>Global topology analysis of the Escherichia coli inner membrane proteome.</title>
        <authorList>
            <person name="Daley D.O."/>
            <person name="Rapp M."/>
            <person name="Granseth E."/>
            <person name="Melen K."/>
            <person name="Drew D."/>
            <person name="von Heijne G."/>
        </authorList>
    </citation>
    <scope>TOPOLOGY [LARGE SCALE ANALYSIS]</scope>
    <source>
        <strain>K12 / MG1655 / ATCC 47076</strain>
    </source>
</reference>
<keyword id="KW-0997">Cell inner membrane</keyword>
<keyword id="KW-1003">Cell membrane</keyword>
<keyword id="KW-0472">Membrane</keyword>
<keyword id="KW-1185">Reference proteome</keyword>
<keyword id="KW-0762">Sugar transport</keyword>
<keyword id="KW-0812">Transmembrane</keyword>
<keyword id="KW-1133">Transmembrane helix</keyword>
<keyword id="KW-0813">Transport</keyword>
<feature type="chain" id="PRO_0000059942" description="D-allose transport system permease protein AlsC">
    <location>
        <begin position="1"/>
        <end position="326"/>
    </location>
</feature>
<feature type="topological domain" description="Cytoplasmic" evidence="1">
    <location>
        <begin position="1"/>
        <end position="18"/>
    </location>
</feature>
<feature type="transmembrane region" description="Helical" evidence="1">
    <location>
        <begin position="19"/>
        <end position="39"/>
    </location>
</feature>
<feature type="topological domain" description="Periplasmic" evidence="1">
    <location>
        <begin position="40"/>
        <end position="70"/>
    </location>
</feature>
<feature type="transmembrane region" description="Helical" evidence="1">
    <location>
        <begin position="71"/>
        <end position="91"/>
    </location>
</feature>
<feature type="topological domain" description="Cytoplasmic" evidence="1">
    <location>
        <begin position="92"/>
        <end position="101"/>
    </location>
</feature>
<feature type="transmembrane region" description="Helical" evidence="1">
    <location>
        <begin position="102"/>
        <end position="122"/>
    </location>
</feature>
<feature type="topological domain" description="Periplasmic" evidence="1">
    <location>
        <begin position="123"/>
        <end position="124"/>
    </location>
</feature>
<feature type="transmembrane region" description="Helical" evidence="1">
    <location>
        <begin position="125"/>
        <end position="145"/>
    </location>
</feature>
<feature type="topological domain" description="Cytoplasmic" evidence="1">
    <location>
        <begin position="146"/>
        <end position="149"/>
    </location>
</feature>
<feature type="transmembrane region" description="Helical" evidence="1">
    <location>
        <begin position="150"/>
        <end position="170"/>
    </location>
</feature>
<feature type="topological domain" description="Periplasmic" evidence="1">
    <location>
        <begin position="171"/>
        <end position="172"/>
    </location>
</feature>
<feature type="transmembrane region" description="Helical" evidence="1">
    <location>
        <begin position="173"/>
        <end position="193"/>
    </location>
</feature>
<feature type="topological domain" description="Cytoplasmic" evidence="1">
    <location>
        <begin position="194"/>
        <end position="221"/>
    </location>
</feature>
<feature type="transmembrane region" description="Helical" evidence="1">
    <location>
        <begin position="222"/>
        <end position="242"/>
    </location>
</feature>
<feature type="topological domain" description="Periplasmic" evidence="1">
    <location>
        <begin position="243"/>
        <end position="252"/>
    </location>
</feature>
<feature type="transmembrane region" description="Helical" evidence="1">
    <location>
        <begin position="253"/>
        <end position="273"/>
    </location>
</feature>
<feature type="topological domain" description="Cytoplasmic" evidence="1">
    <location>
        <begin position="274"/>
        <end position="278"/>
    </location>
</feature>
<feature type="transmembrane region" description="Helical" evidence="1">
    <location>
        <begin position="279"/>
        <end position="299"/>
    </location>
</feature>
<feature type="transmembrane region" description="Helical" evidence="1">
    <location>
        <begin position="300"/>
        <end position="320"/>
    </location>
</feature>
<feature type="topological domain" description="Cytoplasmic" evidence="1">
    <location>
        <begin position="321"/>
        <end position="326"/>
    </location>
</feature>
<dbReference type="EMBL" id="U00006">
    <property type="protein sequence ID" value="AAC43180.1"/>
    <property type="molecule type" value="Genomic_DNA"/>
</dbReference>
<dbReference type="EMBL" id="U14003">
    <property type="protein sequence ID" value="AAA96985.1"/>
    <property type="molecule type" value="Genomic_DNA"/>
</dbReference>
<dbReference type="EMBL" id="U00096">
    <property type="protein sequence ID" value="AAC77047.1"/>
    <property type="molecule type" value="Genomic_DNA"/>
</dbReference>
<dbReference type="EMBL" id="AP009048">
    <property type="protein sequence ID" value="BAE78089.1"/>
    <property type="molecule type" value="Genomic_DNA"/>
</dbReference>
<dbReference type="PIR" id="E65217">
    <property type="entry name" value="E65217"/>
</dbReference>
<dbReference type="RefSeq" id="NP_418510.1">
    <property type="nucleotide sequence ID" value="NC_000913.3"/>
</dbReference>
<dbReference type="RefSeq" id="WP_000507106.1">
    <property type="nucleotide sequence ID" value="NZ_SSZK01000016.1"/>
</dbReference>
<dbReference type="BioGRID" id="4262680">
    <property type="interactions" value="9"/>
</dbReference>
<dbReference type="ComplexPortal" id="CPX-4320">
    <property type="entry name" value="D-allose ABC transporter complex"/>
</dbReference>
<dbReference type="FunCoup" id="P32720">
    <property type="interactions" value="418"/>
</dbReference>
<dbReference type="STRING" id="511145.b4086"/>
<dbReference type="TCDB" id="3.A.1.2.6">
    <property type="family name" value="the atp-binding cassette (abc) superfamily"/>
</dbReference>
<dbReference type="PaxDb" id="511145-b4086"/>
<dbReference type="EnsemblBacteria" id="AAC77047">
    <property type="protein sequence ID" value="AAC77047"/>
    <property type="gene ID" value="b4086"/>
</dbReference>
<dbReference type="GeneID" id="948594"/>
<dbReference type="KEGG" id="ecj:JW4047"/>
<dbReference type="KEGG" id="eco:b4086"/>
<dbReference type="KEGG" id="ecoc:C3026_22090"/>
<dbReference type="PATRIC" id="fig|1411691.4.peg.2614"/>
<dbReference type="EchoBASE" id="EB1901"/>
<dbReference type="eggNOG" id="COG1172">
    <property type="taxonomic scope" value="Bacteria"/>
</dbReference>
<dbReference type="HOGENOM" id="CLU_028880_2_2_6"/>
<dbReference type="InParanoid" id="P32720"/>
<dbReference type="OMA" id="WIFPIPA"/>
<dbReference type="OrthoDB" id="8843934at2"/>
<dbReference type="PhylomeDB" id="P32720"/>
<dbReference type="BioCyc" id="EcoCyc:YJCV-MONOMER"/>
<dbReference type="BioCyc" id="MetaCyc:YJCV-MONOMER"/>
<dbReference type="PRO" id="PR:P32720"/>
<dbReference type="Proteomes" id="UP000000625">
    <property type="component" value="Chromosome"/>
</dbReference>
<dbReference type="GO" id="GO:0055052">
    <property type="term" value="C:ATP-binding cassette (ABC) transporter complex, substrate-binding subunit-containing"/>
    <property type="evidence" value="ECO:0000303"/>
    <property type="project" value="ComplexPortal"/>
</dbReference>
<dbReference type="GO" id="GO:0016020">
    <property type="term" value="C:membrane"/>
    <property type="evidence" value="ECO:0000303"/>
    <property type="project" value="ComplexPortal"/>
</dbReference>
<dbReference type="GO" id="GO:0005886">
    <property type="term" value="C:plasma membrane"/>
    <property type="evidence" value="ECO:0000314"/>
    <property type="project" value="EcoCyc"/>
</dbReference>
<dbReference type="GO" id="GO:0022857">
    <property type="term" value="F:transmembrane transporter activity"/>
    <property type="evidence" value="ECO:0007669"/>
    <property type="project" value="InterPro"/>
</dbReference>
<dbReference type="GO" id="GO:0015754">
    <property type="term" value="P:D-allose transmembrane transport"/>
    <property type="evidence" value="ECO:0000269"/>
    <property type="project" value="EcoCyc"/>
</dbReference>
<dbReference type="GO" id="GO:0015752">
    <property type="term" value="P:D-ribose transmembrane transport"/>
    <property type="evidence" value="ECO:0000303"/>
    <property type="project" value="ComplexPortal"/>
</dbReference>
<dbReference type="CDD" id="cd06579">
    <property type="entry name" value="TM_PBP1_transp_AraH_like"/>
    <property type="match status" value="1"/>
</dbReference>
<dbReference type="InterPro" id="IPR001851">
    <property type="entry name" value="ABC_transp_permease"/>
</dbReference>
<dbReference type="NCBIfam" id="NF007252">
    <property type="entry name" value="PRK09699.1"/>
    <property type="match status" value="1"/>
</dbReference>
<dbReference type="PANTHER" id="PTHR32196:SF21">
    <property type="entry name" value="ABC TRANSPORTER PERMEASE PROTEIN YPHD-RELATED"/>
    <property type="match status" value="1"/>
</dbReference>
<dbReference type="PANTHER" id="PTHR32196">
    <property type="entry name" value="ABC TRANSPORTER PERMEASE PROTEIN YPHD-RELATED-RELATED"/>
    <property type="match status" value="1"/>
</dbReference>
<dbReference type="Pfam" id="PF02653">
    <property type="entry name" value="BPD_transp_2"/>
    <property type="match status" value="1"/>
</dbReference>
<name>ALSC_ECOLI</name>
<organism>
    <name type="scientific">Escherichia coli (strain K12)</name>
    <dbReference type="NCBI Taxonomy" id="83333"/>
    <lineage>
        <taxon>Bacteria</taxon>
        <taxon>Pseudomonadati</taxon>
        <taxon>Pseudomonadota</taxon>
        <taxon>Gammaproteobacteria</taxon>
        <taxon>Enterobacterales</taxon>
        <taxon>Enterobacteriaceae</taxon>
        <taxon>Escherichia</taxon>
    </lineage>
</organism>
<gene>
    <name type="primary">alsC</name>
    <name type="synonym">yjcV</name>
    <name type="ordered locus">b4086</name>
    <name type="ordered locus">JW4047</name>
</gene>
<proteinExistence type="evidence at protein level"/>
<sequence>MGFTTRVKSEASEKKPFNFALFWDKYGTFFILAIIVAIFGSLSPEYFLTTNNITQIFVQSSVTVLIGMGEFFAILVAGIDLSVGAILALSGMVTAKLMLAGVDPFLAAMIGGVLVGGALGAINGCLVNWTGLHPFIITLGTNAIFRGITLVISDANSVYGFSFDFVNFFAASVIGIPVPVIFSLIVALILWFLTTRMRLGRNIYALGGNKNSAFYSGIDVKFHILVVFIISGVCAGLAGVVSTARLGAAEPLAGMGFETYAIASAIIGGTSFFGGKGRIFSVVIGGLIIGTINNGLNILQVQTYYQLVVMGGLIIAAVALDRLISK</sequence>
<protein>
    <recommendedName>
        <fullName>D-allose transport system permease protein AlsC</fullName>
    </recommendedName>
</protein>
<comment type="function">
    <text evidence="2">Part of the binding-protein-dependent transport system AlsBAC for D-allose; probably responsible for the translocation of the substrate across the membrane.</text>
</comment>
<comment type="subcellular location">
    <subcellularLocation>
        <location>Cell inner membrane</location>
        <topology>Multi-pass membrane protein</topology>
    </subcellularLocation>
</comment>
<comment type="similarity">
    <text evidence="3">Belongs to the binding-protein-dependent transport system permease family. AraH/RbsC subfamily.</text>
</comment>
<accession>P32720</accession>
<accession>Q2M6L7</accession>